<reference key="1">
    <citation type="submission" date="2006-03" db="EMBL/GenBank/DDBJ databases">
        <title>Complete genome sequence of Francisella tularensis LVS (Live Vaccine Strain).</title>
        <authorList>
            <person name="Chain P."/>
            <person name="Larimer F."/>
            <person name="Land M."/>
            <person name="Stilwagen S."/>
            <person name="Larsson P."/>
            <person name="Bearden S."/>
            <person name="Chu M."/>
            <person name="Oyston P."/>
            <person name="Forsman M."/>
            <person name="Andersson S."/>
            <person name="Lindler L."/>
            <person name="Titball R."/>
            <person name="Garcia E."/>
        </authorList>
    </citation>
    <scope>NUCLEOTIDE SEQUENCE [LARGE SCALE GENOMIC DNA]</scope>
    <source>
        <strain>LVS</strain>
    </source>
</reference>
<comment type="function">
    <text evidence="1">Involved in the de novo purine biosynthesis. Catalyzes the transfer of formate to 5-phospho-ribosyl-glycinamide (GAR), producing 5-phospho-ribosyl-N-formylglycinamide (FGAR). Formate is provided by PurU via hydrolysis of 10-formyl-tetrahydrofolate.</text>
</comment>
<comment type="catalytic activity">
    <reaction evidence="1">
        <text>N(1)-(5-phospho-beta-D-ribosyl)glycinamide + formate + ATP = N(2)-formyl-N(1)-(5-phospho-beta-D-ribosyl)glycinamide + ADP + phosphate + H(+)</text>
        <dbReference type="Rhea" id="RHEA:24829"/>
        <dbReference type="ChEBI" id="CHEBI:15378"/>
        <dbReference type="ChEBI" id="CHEBI:15740"/>
        <dbReference type="ChEBI" id="CHEBI:30616"/>
        <dbReference type="ChEBI" id="CHEBI:43474"/>
        <dbReference type="ChEBI" id="CHEBI:143788"/>
        <dbReference type="ChEBI" id="CHEBI:147286"/>
        <dbReference type="ChEBI" id="CHEBI:456216"/>
        <dbReference type="EC" id="6.3.1.21"/>
    </reaction>
    <physiologicalReaction direction="left-to-right" evidence="1">
        <dbReference type="Rhea" id="RHEA:24830"/>
    </physiologicalReaction>
</comment>
<comment type="pathway">
    <text evidence="1">Purine metabolism; IMP biosynthesis via de novo pathway; N(2)-formyl-N(1)-(5-phospho-D-ribosyl)glycinamide from N(1)-(5-phospho-D-ribosyl)glycinamide (formate route): step 1/1.</text>
</comment>
<comment type="subunit">
    <text evidence="1">Homodimer.</text>
</comment>
<comment type="similarity">
    <text evidence="1">Belongs to the PurK/PurT family.</text>
</comment>
<organism>
    <name type="scientific">Francisella tularensis subsp. holarctica (strain LVS)</name>
    <dbReference type="NCBI Taxonomy" id="376619"/>
    <lineage>
        <taxon>Bacteria</taxon>
        <taxon>Pseudomonadati</taxon>
        <taxon>Pseudomonadota</taxon>
        <taxon>Gammaproteobacteria</taxon>
        <taxon>Thiotrichales</taxon>
        <taxon>Francisellaceae</taxon>
        <taxon>Francisella</taxon>
    </lineage>
</organism>
<name>PURT_FRATH</name>
<feature type="chain" id="PRO_0000319168" description="Formate-dependent phosphoribosylglycinamide formyltransferase">
    <location>
        <begin position="1"/>
        <end position="386"/>
    </location>
</feature>
<feature type="domain" description="ATP-grasp" evidence="1">
    <location>
        <begin position="112"/>
        <end position="301"/>
    </location>
</feature>
<feature type="binding site" evidence="1">
    <location>
        <begin position="15"/>
        <end position="16"/>
    </location>
    <ligand>
        <name>N(1)-(5-phospho-beta-D-ribosyl)glycinamide</name>
        <dbReference type="ChEBI" id="CHEBI:143788"/>
    </ligand>
</feature>
<feature type="binding site" evidence="1">
    <location>
        <position position="75"/>
    </location>
    <ligand>
        <name>N(1)-(5-phospho-beta-D-ribosyl)glycinamide</name>
        <dbReference type="ChEBI" id="CHEBI:143788"/>
    </ligand>
</feature>
<feature type="binding site" evidence="1">
    <location>
        <position position="107"/>
    </location>
    <ligand>
        <name>ATP</name>
        <dbReference type="ChEBI" id="CHEBI:30616"/>
    </ligand>
</feature>
<feature type="binding site" evidence="1">
    <location>
        <position position="148"/>
    </location>
    <ligand>
        <name>ATP</name>
        <dbReference type="ChEBI" id="CHEBI:30616"/>
    </ligand>
</feature>
<feature type="binding site" evidence="1">
    <location>
        <begin position="153"/>
        <end position="158"/>
    </location>
    <ligand>
        <name>ATP</name>
        <dbReference type="ChEBI" id="CHEBI:30616"/>
    </ligand>
</feature>
<feature type="binding site" evidence="1">
    <location>
        <begin position="188"/>
        <end position="191"/>
    </location>
    <ligand>
        <name>ATP</name>
        <dbReference type="ChEBI" id="CHEBI:30616"/>
    </ligand>
</feature>
<feature type="binding site" evidence="1">
    <location>
        <position position="196"/>
    </location>
    <ligand>
        <name>ATP</name>
        <dbReference type="ChEBI" id="CHEBI:30616"/>
    </ligand>
</feature>
<feature type="binding site" evidence="1">
    <location>
        <position position="260"/>
    </location>
    <ligand>
        <name>Mg(2+)</name>
        <dbReference type="ChEBI" id="CHEBI:18420"/>
    </ligand>
</feature>
<feature type="binding site" evidence="1">
    <location>
        <position position="272"/>
    </location>
    <ligand>
        <name>Mg(2+)</name>
        <dbReference type="ChEBI" id="CHEBI:18420"/>
    </ligand>
</feature>
<feature type="binding site" evidence="1">
    <location>
        <position position="279"/>
    </location>
    <ligand>
        <name>N(1)-(5-phospho-beta-D-ribosyl)glycinamide</name>
        <dbReference type="ChEBI" id="CHEBI:143788"/>
    </ligand>
</feature>
<feature type="binding site" evidence="1">
    <location>
        <position position="349"/>
    </location>
    <ligand>
        <name>N(1)-(5-phospho-beta-D-ribosyl)glycinamide</name>
        <dbReference type="ChEBI" id="CHEBI:143788"/>
    </ligand>
</feature>
<feature type="binding site" evidence="1">
    <location>
        <begin position="356"/>
        <end position="357"/>
    </location>
    <ligand>
        <name>N(1)-(5-phospho-beta-D-ribosyl)glycinamide</name>
        <dbReference type="ChEBI" id="CHEBI:143788"/>
    </ligand>
</feature>
<accession>Q2A5V8</accession>
<dbReference type="EC" id="6.3.1.21" evidence="1"/>
<dbReference type="EMBL" id="AM233362">
    <property type="protein sequence ID" value="CAJ78533.1"/>
    <property type="molecule type" value="Genomic_DNA"/>
</dbReference>
<dbReference type="RefSeq" id="WP_003014073.1">
    <property type="nucleotide sequence ID" value="NZ_CP009694.1"/>
</dbReference>
<dbReference type="SMR" id="Q2A5V8"/>
<dbReference type="KEGG" id="ftl:FTL_0092"/>
<dbReference type="UniPathway" id="UPA00074">
    <property type="reaction ID" value="UER00127"/>
</dbReference>
<dbReference type="Proteomes" id="UP000001944">
    <property type="component" value="Chromosome"/>
</dbReference>
<dbReference type="GO" id="GO:0005829">
    <property type="term" value="C:cytosol"/>
    <property type="evidence" value="ECO:0007669"/>
    <property type="project" value="TreeGrafter"/>
</dbReference>
<dbReference type="GO" id="GO:0005524">
    <property type="term" value="F:ATP binding"/>
    <property type="evidence" value="ECO:0007669"/>
    <property type="project" value="UniProtKB-UniRule"/>
</dbReference>
<dbReference type="GO" id="GO:0000287">
    <property type="term" value="F:magnesium ion binding"/>
    <property type="evidence" value="ECO:0007669"/>
    <property type="project" value="InterPro"/>
</dbReference>
<dbReference type="GO" id="GO:0043815">
    <property type="term" value="F:phosphoribosylglycinamide formyltransferase 2 activity"/>
    <property type="evidence" value="ECO:0007669"/>
    <property type="project" value="UniProtKB-UniRule"/>
</dbReference>
<dbReference type="GO" id="GO:0004644">
    <property type="term" value="F:phosphoribosylglycinamide formyltransferase activity"/>
    <property type="evidence" value="ECO:0007669"/>
    <property type="project" value="InterPro"/>
</dbReference>
<dbReference type="GO" id="GO:0006189">
    <property type="term" value="P:'de novo' IMP biosynthetic process"/>
    <property type="evidence" value="ECO:0007669"/>
    <property type="project" value="UniProtKB-UniRule"/>
</dbReference>
<dbReference type="Gene3D" id="3.40.50.20">
    <property type="match status" value="1"/>
</dbReference>
<dbReference type="Gene3D" id="3.30.1490.20">
    <property type="entry name" value="ATP-grasp fold, A domain"/>
    <property type="match status" value="1"/>
</dbReference>
<dbReference type="Gene3D" id="3.30.470.20">
    <property type="entry name" value="ATP-grasp fold, B domain"/>
    <property type="match status" value="1"/>
</dbReference>
<dbReference type="HAMAP" id="MF_01643">
    <property type="entry name" value="PurT"/>
    <property type="match status" value="1"/>
</dbReference>
<dbReference type="InterPro" id="IPR011761">
    <property type="entry name" value="ATP-grasp"/>
</dbReference>
<dbReference type="InterPro" id="IPR003135">
    <property type="entry name" value="ATP-grasp_carboxylate-amine"/>
</dbReference>
<dbReference type="InterPro" id="IPR013815">
    <property type="entry name" value="ATP_grasp_subdomain_1"/>
</dbReference>
<dbReference type="InterPro" id="IPR016185">
    <property type="entry name" value="PreATP-grasp_dom_sf"/>
</dbReference>
<dbReference type="InterPro" id="IPR005862">
    <property type="entry name" value="PurT"/>
</dbReference>
<dbReference type="InterPro" id="IPR054350">
    <property type="entry name" value="PurT/PurK_preATP-grasp"/>
</dbReference>
<dbReference type="InterPro" id="IPR048740">
    <property type="entry name" value="PurT_C"/>
</dbReference>
<dbReference type="InterPro" id="IPR011054">
    <property type="entry name" value="Rudment_hybrid_motif"/>
</dbReference>
<dbReference type="NCBIfam" id="NF006766">
    <property type="entry name" value="PRK09288.1"/>
    <property type="match status" value="1"/>
</dbReference>
<dbReference type="NCBIfam" id="TIGR01142">
    <property type="entry name" value="purT"/>
    <property type="match status" value="1"/>
</dbReference>
<dbReference type="PANTHER" id="PTHR43055">
    <property type="entry name" value="FORMATE-DEPENDENT PHOSPHORIBOSYLGLYCINAMIDE FORMYLTRANSFERASE"/>
    <property type="match status" value="1"/>
</dbReference>
<dbReference type="PANTHER" id="PTHR43055:SF1">
    <property type="entry name" value="FORMATE-DEPENDENT PHOSPHORIBOSYLGLYCINAMIDE FORMYLTRANSFERASE"/>
    <property type="match status" value="1"/>
</dbReference>
<dbReference type="Pfam" id="PF02222">
    <property type="entry name" value="ATP-grasp"/>
    <property type="match status" value="1"/>
</dbReference>
<dbReference type="Pfam" id="PF21244">
    <property type="entry name" value="PurT_C"/>
    <property type="match status" value="1"/>
</dbReference>
<dbReference type="Pfam" id="PF22660">
    <property type="entry name" value="RS_preATP-grasp-like"/>
    <property type="match status" value="1"/>
</dbReference>
<dbReference type="SUPFAM" id="SSF56059">
    <property type="entry name" value="Glutathione synthetase ATP-binding domain-like"/>
    <property type="match status" value="1"/>
</dbReference>
<dbReference type="SUPFAM" id="SSF52440">
    <property type="entry name" value="PreATP-grasp domain"/>
    <property type="match status" value="1"/>
</dbReference>
<dbReference type="SUPFAM" id="SSF51246">
    <property type="entry name" value="Rudiment single hybrid motif"/>
    <property type="match status" value="1"/>
</dbReference>
<dbReference type="PROSITE" id="PS50975">
    <property type="entry name" value="ATP_GRASP"/>
    <property type="match status" value="1"/>
</dbReference>
<protein>
    <recommendedName>
        <fullName evidence="1">Formate-dependent phosphoribosylglycinamide formyltransferase</fullName>
        <ecNumber evidence="1">6.3.1.21</ecNumber>
    </recommendedName>
    <alternativeName>
        <fullName evidence="1">5'-phosphoribosylglycinamide transformylase 2</fullName>
    </alternativeName>
    <alternativeName>
        <fullName evidence="1">Formate-dependent GAR transformylase</fullName>
    </alternativeName>
    <alternativeName>
        <fullName evidence="1">GAR transformylase 2</fullName>
        <shortName evidence="1">GART 2</shortName>
    </alternativeName>
    <alternativeName>
        <fullName evidence="1">Non-folate glycinamide ribonucleotide transformylase</fullName>
    </alternativeName>
    <alternativeName>
        <fullName evidence="1">Phosphoribosylglycinamide formyltransferase 2</fullName>
    </alternativeName>
</protein>
<proteinExistence type="inferred from homology"/>
<gene>
    <name evidence="1" type="primary">purT</name>
    <name type="ordered locus">FTL_0092</name>
</gene>
<keyword id="KW-0067">ATP-binding</keyword>
<keyword id="KW-0436">Ligase</keyword>
<keyword id="KW-0460">Magnesium</keyword>
<keyword id="KW-0479">Metal-binding</keyword>
<keyword id="KW-0547">Nucleotide-binding</keyword>
<keyword id="KW-0658">Purine biosynthesis</keyword>
<keyword id="KW-1185">Reference proteome</keyword>
<sequence>MNISNIKIMLLGSGELGKEFIIAAQRLGIHTIAVDRYKNAPAMQVAHESYVIDMLNSDALEQLILAKNPTYIVPEIEAINTDSLVKLEAHNFNIIPCAKATKLTMDRQGIRALAVQQLNLQTSKFAFANSEQEYLDVIQSIGLPFVIKPVMSSSGKGQSIVKEHNEIKKAWDYAQNGSRGHAKGVIVEQFIDFDYEITLLTVRHKDGTSFCDPIGHIQKDGDYRFSWQPHTMPDTALAKSQEIAKEITDALGGYGVFGVELFIKGDEVFFNEVSPRPHDTGMVTLISQNINEFELHLRAIVGLPIPDIQTLQPSASAAILLEGDTANASICGIDKALADANVDIRIFSKKEIHGKRRMGVVLAKAQNTHIALETSKQALAHIHLTK</sequence>
<evidence type="ECO:0000255" key="1">
    <source>
        <dbReference type="HAMAP-Rule" id="MF_01643"/>
    </source>
</evidence>